<gene>
    <name evidence="1" type="primary">rlmH</name>
    <name type="ordered locus">Lcho_1948</name>
</gene>
<accession>B1Y0V7</accession>
<sequence>MKLLLIAVGQRLPAWADTAYEDYAKRFPPDLRLELKAVKTEARTTGKPVEALMAAEKTRIEAALPRGCRRVVLDEHGQRVTTAQLAERLAVWQRDGRDVALLVGGPDGLDQTLRDGADEKLRLSDLTLPHAFVRVMLAEALYRAWTLSIGHPYHRE</sequence>
<dbReference type="EC" id="2.1.1.177" evidence="1"/>
<dbReference type="EMBL" id="CP001013">
    <property type="protein sequence ID" value="ACB34215.1"/>
    <property type="molecule type" value="Genomic_DNA"/>
</dbReference>
<dbReference type="RefSeq" id="WP_012346976.1">
    <property type="nucleotide sequence ID" value="NC_010524.1"/>
</dbReference>
<dbReference type="SMR" id="B1Y0V7"/>
<dbReference type="STRING" id="395495.Lcho_1948"/>
<dbReference type="KEGG" id="lch:Lcho_1948"/>
<dbReference type="eggNOG" id="COG1576">
    <property type="taxonomic scope" value="Bacteria"/>
</dbReference>
<dbReference type="HOGENOM" id="CLU_100552_1_0_4"/>
<dbReference type="OrthoDB" id="9806643at2"/>
<dbReference type="Proteomes" id="UP000001693">
    <property type="component" value="Chromosome"/>
</dbReference>
<dbReference type="GO" id="GO:0005737">
    <property type="term" value="C:cytoplasm"/>
    <property type="evidence" value="ECO:0007669"/>
    <property type="project" value="UniProtKB-SubCell"/>
</dbReference>
<dbReference type="GO" id="GO:0070038">
    <property type="term" value="F:rRNA (pseudouridine-N3-)-methyltransferase activity"/>
    <property type="evidence" value="ECO:0007669"/>
    <property type="project" value="UniProtKB-UniRule"/>
</dbReference>
<dbReference type="CDD" id="cd18081">
    <property type="entry name" value="RlmH-like"/>
    <property type="match status" value="1"/>
</dbReference>
<dbReference type="Gene3D" id="3.40.1280.10">
    <property type="match status" value="1"/>
</dbReference>
<dbReference type="HAMAP" id="MF_00658">
    <property type="entry name" value="23SrRNA_methyltr_H"/>
    <property type="match status" value="1"/>
</dbReference>
<dbReference type="InterPro" id="IPR029028">
    <property type="entry name" value="Alpha/beta_knot_MTases"/>
</dbReference>
<dbReference type="InterPro" id="IPR003742">
    <property type="entry name" value="RlmH-like"/>
</dbReference>
<dbReference type="InterPro" id="IPR029026">
    <property type="entry name" value="tRNA_m1G_MTases_N"/>
</dbReference>
<dbReference type="NCBIfam" id="NF000986">
    <property type="entry name" value="PRK00103.1-4"/>
    <property type="match status" value="1"/>
</dbReference>
<dbReference type="PANTHER" id="PTHR33603">
    <property type="entry name" value="METHYLTRANSFERASE"/>
    <property type="match status" value="1"/>
</dbReference>
<dbReference type="PANTHER" id="PTHR33603:SF1">
    <property type="entry name" value="RIBOSOMAL RNA LARGE SUBUNIT METHYLTRANSFERASE H"/>
    <property type="match status" value="1"/>
</dbReference>
<dbReference type="Pfam" id="PF02590">
    <property type="entry name" value="SPOUT_MTase"/>
    <property type="match status" value="1"/>
</dbReference>
<dbReference type="PIRSF" id="PIRSF004505">
    <property type="entry name" value="MT_bac"/>
    <property type="match status" value="1"/>
</dbReference>
<dbReference type="SUPFAM" id="SSF75217">
    <property type="entry name" value="alpha/beta knot"/>
    <property type="match status" value="1"/>
</dbReference>
<keyword id="KW-0963">Cytoplasm</keyword>
<keyword id="KW-0489">Methyltransferase</keyword>
<keyword id="KW-1185">Reference proteome</keyword>
<keyword id="KW-0698">rRNA processing</keyword>
<keyword id="KW-0949">S-adenosyl-L-methionine</keyword>
<keyword id="KW-0808">Transferase</keyword>
<name>RLMH_LEPCP</name>
<proteinExistence type="inferred from homology"/>
<comment type="function">
    <text evidence="1">Specifically methylates the pseudouridine at position 1915 (m3Psi1915) in 23S rRNA.</text>
</comment>
<comment type="catalytic activity">
    <reaction evidence="1">
        <text>pseudouridine(1915) in 23S rRNA + S-adenosyl-L-methionine = N(3)-methylpseudouridine(1915) in 23S rRNA + S-adenosyl-L-homocysteine + H(+)</text>
        <dbReference type="Rhea" id="RHEA:42752"/>
        <dbReference type="Rhea" id="RHEA-COMP:10221"/>
        <dbReference type="Rhea" id="RHEA-COMP:10222"/>
        <dbReference type="ChEBI" id="CHEBI:15378"/>
        <dbReference type="ChEBI" id="CHEBI:57856"/>
        <dbReference type="ChEBI" id="CHEBI:59789"/>
        <dbReference type="ChEBI" id="CHEBI:65314"/>
        <dbReference type="ChEBI" id="CHEBI:74486"/>
        <dbReference type="EC" id="2.1.1.177"/>
    </reaction>
</comment>
<comment type="subunit">
    <text evidence="1">Homodimer.</text>
</comment>
<comment type="subcellular location">
    <subcellularLocation>
        <location evidence="1">Cytoplasm</location>
    </subcellularLocation>
</comment>
<comment type="similarity">
    <text evidence="1">Belongs to the RNA methyltransferase RlmH family.</text>
</comment>
<evidence type="ECO:0000255" key="1">
    <source>
        <dbReference type="HAMAP-Rule" id="MF_00658"/>
    </source>
</evidence>
<protein>
    <recommendedName>
        <fullName evidence="1">Ribosomal RNA large subunit methyltransferase H</fullName>
        <ecNumber evidence="1">2.1.1.177</ecNumber>
    </recommendedName>
    <alternativeName>
        <fullName evidence="1">23S rRNA (pseudouridine1915-N3)-methyltransferase</fullName>
    </alternativeName>
    <alternativeName>
        <fullName evidence="1">23S rRNA m3Psi1915 methyltransferase</fullName>
    </alternativeName>
    <alternativeName>
        <fullName evidence="1">rRNA (pseudouridine-N3-)-methyltransferase RlmH</fullName>
    </alternativeName>
</protein>
<organism>
    <name type="scientific">Leptothrix cholodnii (strain ATCC 51168 / LMG 8142 / SP-6)</name>
    <name type="common">Leptothrix discophora (strain SP-6)</name>
    <dbReference type="NCBI Taxonomy" id="395495"/>
    <lineage>
        <taxon>Bacteria</taxon>
        <taxon>Pseudomonadati</taxon>
        <taxon>Pseudomonadota</taxon>
        <taxon>Betaproteobacteria</taxon>
        <taxon>Burkholderiales</taxon>
        <taxon>Sphaerotilaceae</taxon>
        <taxon>Leptothrix</taxon>
    </lineage>
</organism>
<reference key="1">
    <citation type="submission" date="2008-03" db="EMBL/GenBank/DDBJ databases">
        <title>Complete sequence of Leptothrix cholodnii SP-6.</title>
        <authorList>
            <consortium name="US DOE Joint Genome Institute"/>
            <person name="Copeland A."/>
            <person name="Lucas S."/>
            <person name="Lapidus A."/>
            <person name="Glavina del Rio T."/>
            <person name="Dalin E."/>
            <person name="Tice H."/>
            <person name="Bruce D."/>
            <person name="Goodwin L."/>
            <person name="Pitluck S."/>
            <person name="Chertkov O."/>
            <person name="Brettin T."/>
            <person name="Detter J.C."/>
            <person name="Han C."/>
            <person name="Kuske C.R."/>
            <person name="Schmutz J."/>
            <person name="Larimer F."/>
            <person name="Land M."/>
            <person name="Hauser L."/>
            <person name="Kyrpides N."/>
            <person name="Lykidis A."/>
            <person name="Emerson D."/>
            <person name="Richardson P."/>
        </authorList>
    </citation>
    <scope>NUCLEOTIDE SEQUENCE [LARGE SCALE GENOMIC DNA]</scope>
    <source>
        <strain>ATCC 51168 / LMG 8142 / SP-6</strain>
    </source>
</reference>
<feature type="chain" id="PRO_0000366616" description="Ribosomal RNA large subunit methyltransferase H">
    <location>
        <begin position="1"/>
        <end position="156"/>
    </location>
</feature>
<feature type="binding site" evidence="1">
    <location>
        <position position="73"/>
    </location>
    <ligand>
        <name>S-adenosyl-L-methionine</name>
        <dbReference type="ChEBI" id="CHEBI:59789"/>
    </ligand>
</feature>
<feature type="binding site" evidence="1">
    <location>
        <position position="104"/>
    </location>
    <ligand>
        <name>S-adenosyl-L-methionine</name>
        <dbReference type="ChEBI" id="CHEBI:59789"/>
    </ligand>
</feature>
<feature type="binding site" evidence="1">
    <location>
        <begin position="123"/>
        <end position="128"/>
    </location>
    <ligand>
        <name>S-adenosyl-L-methionine</name>
        <dbReference type="ChEBI" id="CHEBI:59789"/>
    </ligand>
</feature>